<protein>
    <recommendedName>
        <fullName evidence="2">Large ribosomal subunit protein bL9</fullName>
    </recommendedName>
    <alternativeName>
        <fullName>50S ribosomal protein L9</fullName>
    </alternativeName>
</protein>
<keyword id="KW-0002">3D-structure</keyword>
<keyword id="KW-0903">Direct protein sequencing</keyword>
<keyword id="KW-1185">Reference proteome</keyword>
<keyword id="KW-0687">Ribonucleoprotein</keyword>
<keyword id="KW-0689">Ribosomal protein</keyword>
<keyword id="KW-0694">RNA-binding</keyword>
<keyword id="KW-0699">rRNA-binding</keyword>
<comment type="function">
    <text>Binds to the 23S rRNA. Extends more that 50 Angstroms beyond the surface of the 70S ribosome.</text>
</comment>
<comment type="subunit">
    <text>Part of the 50S ribosomal subunit.</text>
</comment>
<comment type="mass spectrometry"/>
<comment type="similarity">
    <text evidence="2">Belongs to the bacterial ribosomal protein bL9 family.</text>
</comment>
<accession>Q5SLQ1</accession>
<gene>
    <name type="primary">rplI</name>
    <name type="ordered locus">TTHA0242</name>
</gene>
<feature type="chain" id="PRO_0000176696" description="Large ribosomal subunit protein bL9">
    <location>
        <begin position="1"/>
        <end position="148"/>
    </location>
</feature>
<feature type="strand" evidence="3">
    <location>
        <begin position="2"/>
        <end position="7"/>
    </location>
</feature>
<feature type="strand" evidence="3">
    <location>
        <begin position="10"/>
        <end position="12"/>
    </location>
</feature>
<feature type="strand" evidence="3">
    <location>
        <begin position="18"/>
        <end position="20"/>
    </location>
</feature>
<feature type="helix" evidence="3">
    <location>
        <begin position="23"/>
        <end position="28"/>
    </location>
</feature>
<feature type="helix" evidence="3">
    <location>
        <begin position="30"/>
        <end position="33"/>
    </location>
</feature>
<feature type="strand" evidence="3">
    <location>
        <begin position="35"/>
        <end position="38"/>
    </location>
</feature>
<feature type="helix" evidence="3">
    <location>
        <begin position="41"/>
        <end position="57"/>
    </location>
</feature>
<feature type="helix" evidence="3">
    <location>
        <begin position="60"/>
        <end position="72"/>
    </location>
</feature>
<feature type="strand" evidence="3">
    <location>
        <begin position="87"/>
        <end position="90"/>
    </location>
</feature>
<feature type="helix" evidence="3">
    <location>
        <begin position="94"/>
        <end position="104"/>
    </location>
</feature>
<feature type="strand" evidence="3">
    <location>
        <begin position="111"/>
        <end position="114"/>
    </location>
</feature>
<feature type="strand" evidence="3">
    <location>
        <begin position="124"/>
        <end position="126"/>
    </location>
</feature>
<feature type="strand" evidence="3">
    <location>
        <begin position="132"/>
        <end position="134"/>
    </location>
</feature>
<feature type="strand" evidence="3">
    <location>
        <begin position="139"/>
        <end position="142"/>
    </location>
</feature>
<organism>
    <name type="scientific">Thermus thermophilus (strain ATCC 27634 / DSM 579 / HB8)</name>
    <dbReference type="NCBI Taxonomy" id="300852"/>
    <lineage>
        <taxon>Bacteria</taxon>
        <taxon>Thermotogati</taxon>
        <taxon>Deinococcota</taxon>
        <taxon>Deinococci</taxon>
        <taxon>Thermales</taxon>
        <taxon>Thermaceae</taxon>
        <taxon>Thermus</taxon>
    </lineage>
</organism>
<sequence>MKVILLEPLENLGDVGQVVDVKPGYARNYLLPRGLAVLATESNLKALEARIRAQAKRLAERKAEAERLKEILENLTLTIPVRAGETKIYGSVTAKDIAEALSRQHGVTIDPKRLALEKPIKELGEYVLTYKPHPEVPIQLKVSVVAQE</sequence>
<evidence type="ECO:0000269" key="1">
    <source>
    </source>
</evidence>
<evidence type="ECO:0000305" key="2"/>
<evidence type="ECO:0007829" key="3">
    <source>
        <dbReference type="PDB" id="4WT8"/>
    </source>
</evidence>
<reference key="1">
    <citation type="submission" date="2004-11" db="EMBL/GenBank/DDBJ databases">
        <title>Complete genome sequence of Thermus thermophilus HB8.</title>
        <authorList>
            <person name="Masui R."/>
            <person name="Kurokawa K."/>
            <person name="Nakagawa N."/>
            <person name="Tokunaga F."/>
            <person name="Koyama Y."/>
            <person name="Shibata T."/>
            <person name="Oshima T."/>
            <person name="Yokoyama S."/>
            <person name="Yasunaga T."/>
            <person name="Kuramitsu S."/>
        </authorList>
    </citation>
    <scope>NUCLEOTIDE SEQUENCE [LARGE SCALE GENOMIC DNA]</scope>
    <source>
        <strain>ATCC 27634 / DSM 579 / HB8</strain>
    </source>
</reference>
<reference key="2">
    <citation type="journal article" date="1995" name="Endocyt. Cell Res.">
        <title>The isolation and complete amino acid sequence of the ribosomal protein L36 from Thermus thermophilus and its zinc-binding motif.</title>
        <authorList>
            <person name="Boysen R.I."/>
            <person name="Lorenz S."/>
            <person name="Kim J.S."/>
            <person name="Schroeder W.F.K.J."/>
            <person name="Erdmann V.A."/>
        </authorList>
    </citation>
    <scope>PROTEIN SEQUENCE OF 1-31</scope>
</reference>
<reference key="3">
    <citation type="journal article" date="2000" name="Biol. Chem.">
        <title>Identification of the 50S ribosomal proteins from the eubacterium Thermus thermophilus.</title>
        <authorList>
            <person name="Katsani K.R."/>
            <person name="Tsiboli P."/>
            <person name="Anagnostopoulos K."/>
            <person name="Urlaub H."/>
            <person name="Choli-Papadopoulou T."/>
        </authorList>
    </citation>
    <scope>PROTEIN SEQUENCE OF 1-15</scope>
    <source>
        <strain>ATCC 27634 / DSM 579 / HB8</strain>
    </source>
</reference>
<reference key="4">
    <citation type="journal article" date="2005" name="Proteomics">
        <title>Extending ribosomal protein identifications to unsequenced bacterial strains using matrix-assisted laser desorption/ionization mass spectrometry.</title>
        <authorList>
            <person name="Suh M.-J."/>
            <person name="Hamburg D.M."/>
            <person name="Gregory S.T."/>
            <person name="Dahlberg A.E."/>
            <person name="Limbach P.A."/>
        </authorList>
    </citation>
    <scope>MASS SPECTROMETRY</scope>
    <source>
        <strain>ATCC 27634 / DSM 579 / HB8</strain>
    </source>
</reference>
<reference key="5">
    <citation type="journal article" date="2001" name="Cell">
        <title>The path of messenger RNA through the ribosome.</title>
        <authorList>
            <person name="Yusupova G.Z."/>
            <person name="Yusupov M.M."/>
            <person name="Cate J.H.D."/>
            <person name="Noller H.F."/>
        </authorList>
    </citation>
    <scope>X-RAY CRYSTALLOGRAPHY (5.0 ANGSTROMS) OF THE RIBOSOME</scope>
</reference>
<reference key="6">
    <citation type="journal article" date="2001" name="Science">
        <title>Crystal structure of the ribosome at 5.5 A resolution.</title>
        <authorList>
            <person name="Yusupov M.M."/>
            <person name="Yusupova G.Z."/>
            <person name="Baucom A."/>
            <person name="Lieberman K."/>
            <person name="Earnest T.N."/>
            <person name="Cate J.H.D."/>
            <person name="Noller H.F."/>
        </authorList>
    </citation>
    <scope>X-RAY CRYSTALLOGRAPHY (5.5 ANGSTROMS) OF THE RIBOSOME</scope>
</reference>
<reference key="7">
    <citation type="journal article" date="2008" name="Science">
        <title>Insights into translational termination from the structure of RF2 bound to the ribosome.</title>
        <authorList>
            <person name="Weixlbaumer A."/>
            <person name="Jin H."/>
            <person name="Neubauer C."/>
            <person name="Voorhees R.M."/>
            <person name="Petry S."/>
            <person name="Kelley A.C."/>
            <person name="Ramakrishnan V."/>
        </authorList>
    </citation>
    <scope>X-RAY CRYSTALLOGRAPHY (3.45 ANGSTROMS) OF 70S RIBOSOME IN COMPLEX WITH RF2</scope>
    <scope>SUBUNIT</scope>
</reference>
<reference key="8">
    <citation type="journal article" date="2010" name="Proc. Natl. Acad. Sci. U.S.A.">
        <title>Structure of the 70S ribosome bound to release factor 2 and a substrate analog provides insights into catalysis of peptide release.</title>
        <authorList>
            <person name="Jin H."/>
            <person name="Kelley A.C."/>
            <person name="Loakes D."/>
            <person name="Ramakrishnan V."/>
        </authorList>
    </citation>
    <scope>X-RAY CRYSTALLOGRAPHY (3.10 ANGSTROMS) OF 70S RIBOSOME IN COMPLEX WITH RF2</scope>
    <scope>SUBUNIT</scope>
</reference>
<dbReference type="EMBL" id="AP008226">
    <property type="protein sequence ID" value="BAD70065.1"/>
    <property type="molecule type" value="Genomic_DNA"/>
</dbReference>
<dbReference type="RefSeq" id="WP_011227802.1">
    <property type="nucleotide sequence ID" value="NC_006461.1"/>
</dbReference>
<dbReference type="RefSeq" id="YP_143508.1">
    <property type="nucleotide sequence ID" value="NC_006461.1"/>
</dbReference>
<dbReference type="PDB" id="1VVJ">
    <property type="method" value="X-ray"/>
    <property type="resolution" value="3.44 A"/>
    <property type="chains" value="RI/YI=1-148"/>
</dbReference>
<dbReference type="PDB" id="1VY4">
    <property type="method" value="X-ray"/>
    <property type="resolution" value="2.60 A"/>
    <property type="chains" value="BI/DI=1-148"/>
</dbReference>
<dbReference type="PDB" id="1VY5">
    <property type="method" value="X-ray"/>
    <property type="resolution" value="2.55 A"/>
    <property type="chains" value="BI/DI=1-148"/>
</dbReference>
<dbReference type="PDB" id="1VY6">
    <property type="method" value="X-ray"/>
    <property type="resolution" value="2.90 A"/>
    <property type="chains" value="BI/DI=1-148"/>
</dbReference>
<dbReference type="PDB" id="1VY7">
    <property type="method" value="X-ray"/>
    <property type="resolution" value="2.80 A"/>
    <property type="chains" value="BI/DI=1-148"/>
</dbReference>
<dbReference type="PDB" id="4L47">
    <property type="method" value="X-ray"/>
    <property type="resolution" value="3.22 A"/>
    <property type="chains" value="RI/YI=1-148"/>
</dbReference>
<dbReference type="PDB" id="4L71">
    <property type="method" value="X-ray"/>
    <property type="resolution" value="3.90 A"/>
    <property type="chains" value="RI/YI=1-148"/>
</dbReference>
<dbReference type="PDB" id="4LEL">
    <property type="method" value="X-ray"/>
    <property type="resolution" value="3.90 A"/>
    <property type="chains" value="RI/YI=1-148"/>
</dbReference>
<dbReference type="PDB" id="4LFZ">
    <property type="method" value="X-ray"/>
    <property type="resolution" value="3.92 A"/>
    <property type="chains" value="RI/YI=1-148"/>
</dbReference>
<dbReference type="PDB" id="4LNT">
    <property type="method" value="X-ray"/>
    <property type="resolution" value="2.94 A"/>
    <property type="chains" value="RI/YI=1-148"/>
</dbReference>
<dbReference type="PDB" id="4LSK">
    <property type="method" value="X-ray"/>
    <property type="resolution" value="3.48 A"/>
    <property type="chains" value="RI/YI=1-148"/>
</dbReference>
<dbReference type="PDB" id="4LT8">
    <property type="method" value="X-ray"/>
    <property type="resolution" value="3.14 A"/>
    <property type="chains" value="RI/YI=1-148"/>
</dbReference>
<dbReference type="PDB" id="4P6F">
    <property type="method" value="X-ray"/>
    <property type="resolution" value="3.60 A"/>
    <property type="chains" value="RI/YI=1-148"/>
</dbReference>
<dbReference type="PDB" id="4P70">
    <property type="method" value="X-ray"/>
    <property type="resolution" value="3.68 A"/>
    <property type="chains" value="RI/YI=1-148"/>
</dbReference>
<dbReference type="PDB" id="4TUA">
    <property type="method" value="X-ray"/>
    <property type="resolution" value="3.60 A"/>
    <property type="chains" value="RI/YI=1-148"/>
</dbReference>
<dbReference type="PDB" id="4TUB">
    <property type="method" value="X-ray"/>
    <property type="resolution" value="3.60 A"/>
    <property type="chains" value="RI/YI=1-148"/>
</dbReference>
<dbReference type="PDB" id="4TUC">
    <property type="method" value="X-ray"/>
    <property type="resolution" value="3.60 A"/>
    <property type="chains" value="RI/YI=1-148"/>
</dbReference>
<dbReference type="PDB" id="4TUD">
    <property type="method" value="X-ray"/>
    <property type="resolution" value="3.60 A"/>
    <property type="chains" value="RI/YI=1-148"/>
</dbReference>
<dbReference type="PDB" id="4TUE">
    <property type="method" value="X-ray"/>
    <property type="resolution" value="3.50 A"/>
    <property type="chains" value="RI/YI=1-148"/>
</dbReference>
<dbReference type="PDB" id="4V42">
    <property type="method" value="X-ray"/>
    <property type="resolution" value="5.50 A"/>
    <property type="chains" value="BK=43-49"/>
</dbReference>
<dbReference type="PDB" id="4V4P">
    <property type="method" value="X-ray"/>
    <property type="resolution" value="5.50 A"/>
    <property type="chains" value="K=39-49"/>
</dbReference>
<dbReference type="PDB" id="4V4X">
    <property type="method" value="X-ray"/>
    <property type="resolution" value="5.00 A"/>
    <property type="chains" value="BK=1-148"/>
</dbReference>
<dbReference type="PDB" id="4V4Y">
    <property type="method" value="X-ray"/>
    <property type="resolution" value="5.50 A"/>
    <property type="chains" value="BK=1-148"/>
</dbReference>
<dbReference type="PDB" id="4V4Z">
    <property type="method" value="X-ray"/>
    <property type="resolution" value="4.51 A"/>
    <property type="chains" value="BK=1-148"/>
</dbReference>
<dbReference type="PDB" id="4V51">
    <property type="method" value="X-ray"/>
    <property type="resolution" value="2.80 A"/>
    <property type="chains" value="BI/DI=1-148"/>
</dbReference>
<dbReference type="PDB" id="4V5A">
    <property type="method" value="X-ray"/>
    <property type="resolution" value="3.50 A"/>
    <property type="chains" value="BI/DI=1-148"/>
</dbReference>
<dbReference type="PDB" id="4V5C">
    <property type="method" value="X-ray"/>
    <property type="resolution" value="3.30 A"/>
    <property type="chains" value="BI/DI=1-148"/>
</dbReference>
<dbReference type="PDB" id="4V5D">
    <property type="method" value="X-ray"/>
    <property type="resolution" value="3.50 A"/>
    <property type="chains" value="BI/DI=1-148"/>
</dbReference>
<dbReference type="PDB" id="4V5E">
    <property type="method" value="X-ray"/>
    <property type="resolution" value="3.45 A"/>
    <property type="chains" value="BI/DI=1-148"/>
</dbReference>
<dbReference type="PDB" id="4V5J">
    <property type="method" value="X-ray"/>
    <property type="resolution" value="3.10 A"/>
    <property type="chains" value="BI/DI=1-148"/>
</dbReference>
<dbReference type="PDB" id="4V5K">
    <property type="method" value="X-ray"/>
    <property type="resolution" value="3.20 A"/>
    <property type="chains" value="BI/DI=1-148"/>
</dbReference>
<dbReference type="PDB" id="4V67">
    <property type="method" value="X-ray"/>
    <property type="resolution" value="3.00 A"/>
    <property type="chains" value="I=1-148"/>
</dbReference>
<dbReference type="PDB" id="4V68">
    <property type="method" value="EM"/>
    <property type="resolution" value="6.40 A"/>
    <property type="chains" value="BI=1-145"/>
</dbReference>
<dbReference type="PDB" id="4V6A">
    <property type="method" value="X-ray"/>
    <property type="resolution" value="3.10 A"/>
    <property type="chains" value="BI/DI=1-148"/>
</dbReference>
<dbReference type="PDB" id="4V6F">
    <property type="method" value="X-ray"/>
    <property type="resolution" value="3.10 A"/>
    <property type="chains" value="AK/DK=1-148"/>
</dbReference>
<dbReference type="PDB" id="4V6G">
    <property type="method" value="X-ray"/>
    <property type="resolution" value="3.50 A"/>
    <property type="chains" value="BK/DK=1-148"/>
</dbReference>
<dbReference type="PDB" id="4V7J">
    <property type="method" value="X-ray"/>
    <property type="resolution" value="3.30 A"/>
    <property type="chains" value="AI/BI=1-148"/>
</dbReference>
<dbReference type="PDB" id="4V7K">
    <property type="method" value="X-ray"/>
    <property type="resolution" value="3.60 A"/>
    <property type="chains" value="AI/BI=1-148"/>
</dbReference>
<dbReference type="PDB" id="4V7L">
    <property type="method" value="X-ray"/>
    <property type="resolution" value="3.00 A"/>
    <property type="chains" value="BI/DI=1-148"/>
</dbReference>
<dbReference type="PDB" id="4V7M">
    <property type="method" value="X-ray"/>
    <property type="resolution" value="3.45 A"/>
    <property type="chains" value="BI/DI=1-148"/>
</dbReference>
<dbReference type="PDB" id="4V7W">
    <property type="method" value="X-ray"/>
    <property type="resolution" value="3.00 A"/>
    <property type="chains" value="BI/DI=1-148"/>
</dbReference>
<dbReference type="PDB" id="4V7X">
    <property type="method" value="X-ray"/>
    <property type="resolution" value="3.00 A"/>
    <property type="chains" value="BI/DI=1-148"/>
</dbReference>
<dbReference type="PDB" id="4V7Y">
    <property type="method" value="X-ray"/>
    <property type="resolution" value="3.00 A"/>
    <property type="chains" value="BI/DI=1-148"/>
</dbReference>
<dbReference type="PDB" id="4V7Z">
    <property type="method" value="X-ray"/>
    <property type="resolution" value="3.10 A"/>
    <property type="chains" value="BI/DI=1-148"/>
</dbReference>
<dbReference type="PDB" id="4V87">
    <property type="method" value="X-ray"/>
    <property type="resolution" value="3.10 A"/>
    <property type="chains" value="AK/DK=1-146"/>
</dbReference>
<dbReference type="PDB" id="4V8A">
    <property type="method" value="X-ray"/>
    <property type="resolution" value="3.20 A"/>
    <property type="chains" value="AI/BI=1-148"/>
</dbReference>
<dbReference type="PDB" id="4V8B">
    <property type="method" value="X-ray"/>
    <property type="resolution" value="3.00 A"/>
    <property type="chains" value="BK/DK=1-148"/>
</dbReference>
<dbReference type="PDB" id="4V8C">
    <property type="method" value="X-ray"/>
    <property type="resolution" value="3.30 A"/>
    <property type="chains" value="AK/BK=1-148"/>
</dbReference>
<dbReference type="PDB" id="4V8D">
    <property type="method" value="X-ray"/>
    <property type="resolution" value="3.00 A"/>
    <property type="chains" value="BK/DK=1-148"/>
</dbReference>
<dbReference type="PDB" id="4V8E">
    <property type="method" value="X-ray"/>
    <property type="resolution" value="3.30 A"/>
    <property type="chains" value="AK/CK=1-148"/>
</dbReference>
<dbReference type="PDB" id="4V8F">
    <property type="method" value="X-ray"/>
    <property type="resolution" value="3.30 A"/>
    <property type="chains" value="AK/DK=1-148"/>
</dbReference>
<dbReference type="PDB" id="4V8G">
    <property type="method" value="X-ray"/>
    <property type="resolution" value="3.00 A"/>
    <property type="chains" value="BI/DI=1-148"/>
</dbReference>
<dbReference type="PDB" id="4V8H">
    <property type="method" value="X-ray"/>
    <property type="resolution" value="3.10 A"/>
    <property type="chains" value="BI/DI=1-148"/>
</dbReference>
<dbReference type="PDB" id="4V8I">
    <property type="method" value="X-ray"/>
    <property type="resolution" value="2.70 A"/>
    <property type="chains" value="BI/DI=1-148"/>
</dbReference>
<dbReference type="PDB" id="4V8J">
    <property type="method" value="X-ray"/>
    <property type="resolution" value="3.90 A"/>
    <property type="chains" value="BI/DI=1-148"/>
</dbReference>
<dbReference type="PDB" id="4V8N">
    <property type="method" value="X-ray"/>
    <property type="resolution" value="3.10 A"/>
    <property type="chains" value="BI/DI=1-148"/>
</dbReference>
<dbReference type="PDB" id="4V8X">
    <property type="method" value="X-ray"/>
    <property type="resolution" value="3.35 A"/>
    <property type="chains" value="BI/DI=1-148"/>
</dbReference>
<dbReference type="PDB" id="4V95">
    <property type="method" value="X-ray"/>
    <property type="resolution" value="3.20 A"/>
    <property type="chains" value="BI/DI=1-148"/>
</dbReference>
<dbReference type="PDB" id="4V97">
    <property type="method" value="X-ray"/>
    <property type="resolution" value="3.52 A"/>
    <property type="chains" value="BI/DI=1-148"/>
</dbReference>
<dbReference type="PDB" id="4V9A">
    <property type="method" value="X-ray"/>
    <property type="resolution" value="3.30 A"/>
    <property type="chains" value="BK/DK=1-148"/>
</dbReference>
<dbReference type="PDB" id="4V9B">
    <property type="method" value="X-ray"/>
    <property type="resolution" value="3.10 A"/>
    <property type="chains" value="BK/DK=1-148"/>
</dbReference>
<dbReference type="PDB" id="4V9I">
    <property type="method" value="X-ray"/>
    <property type="resolution" value="3.30 A"/>
    <property type="chains" value="BI/DI=1-145"/>
</dbReference>
<dbReference type="PDB" id="4V9R">
    <property type="method" value="X-ray"/>
    <property type="resolution" value="3.00 A"/>
    <property type="chains" value="BI/DI=1-148"/>
</dbReference>
<dbReference type="PDB" id="4V9S">
    <property type="method" value="X-ray"/>
    <property type="resolution" value="3.10 A"/>
    <property type="chains" value="BI/DI=1-148"/>
</dbReference>
<dbReference type="PDB" id="4W2E">
    <property type="method" value="X-ray"/>
    <property type="resolution" value="2.90 A"/>
    <property type="chains" value="y=1-74"/>
</dbReference>
<dbReference type="PDB" id="4W2F">
    <property type="method" value="X-ray"/>
    <property type="resolution" value="2.40 A"/>
    <property type="chains" value="BI/DI=1-148"/>
</dbReference>
<dbReference type="PDB" id="4W2G">
    <property type="method" value="X-ray"/>
    <property type="resolution" value="2.55 A"/>
    <property type="chains" value="BI/DI=1-148"/>
</dbReference>
<dbReference type="PDB" id="4W2H">
    <property type="method" value="X-ray"/>
    <property type="resolution" value="2.70 A"/>
    <property type="chains" value="BI/DI=1-148"/>
</dbReference>
<dbReference type="PDB" id="4W2I">
    <property type="method" value="X-ray"/>
    <property type="resolution" value="2.70 A"/>
    <property type="chains" value="BI/DI=1-148"/>
</dbReference>
<dbReference type="PDB" id="4W4G">
    <property type="method" value="X-ray"/>
    <property type="resolution" value="3.30 A"/>
    <property type="chains" value="RI/YI=1-148"/>
</dbReference>
<dbReference type="PDB" id="4WPO">
    <property type="method" value="X-ray"/>
    <property type="resolution" value="2.80 A"/>
    <property type="chains" value="BZ/DZ=1-74"/>
</dbReference>
<dbReference type="PDB" id="4WQ1">
    <property type="method" value="X-ray"/>
    <property type="resolution" value="3.10 A"/>
    <property type="chains" value="61/69=1-146"/>
</dbReference>
<dbReference type="PDB" id="4WQF">
    <property type="method" value="X-ray"/>
    <property type="resolution" value="2.80 A"/>
    <property type="chains" value="BZ/DZ=1-74"/>
</dbReference>
<dbReference type="PDB" id="4WQR">
    <property type="method" value="X-ray"/>
    <property type="resolution" value="3.15 A"/>
    <property type="chains" value="61/69=1-148"/>
</dbReference>
<dbReference type="PDB" id="4WQU">
    <property type="method" value="X-ray"/>
    <property type="resolution" value="2.80 A"/>
    <property type="chains" value="BZ/DZ=1-74"/>
</dbReference>
<dbReference type="PDB" id="4WQY">
    <property type="method" value="X-ray"/>
    <property type="resolution" value="2.80 A"/>
    <property type="chains" value="BZ/DZ=1-74"/>
</dbReference>
<dbReference type="PDB" id="4WR6">
    <property type="method" value="X-ray"/>
    <property type="resolution" value="3.05 A"/>
    <property type="chains" value="61/69=1-148"/>
</dbReference>
<dbReference type="PDB" id="4WRA">
    <property type="method" value="X-ray"/>
    <property type="resolution" value="3.05 A"/>
    <property type="chains" value="61/69=1-148"/>
</dbReference>
<dbReference type="PDB" id="4WRO">
    <property type="method" value="X-ray"/>
    <property type="resolution" value="3.05 A"/>
    <property type="chains" value="61=1-148"/>
</dbReference>
<dbReference type="PDB" id="4WSD">
    <property type="method" value="X-ray"/>
    <property type="resolution" value="2.95 A"/>
    <property type="chains" value="61/69=1-148"/>
</dbReference>
<dbReference type="PDB" id="4WSM">
    <property type="method" value="X-ray"/>
    <property type="resolution" value="3.30 A"/>
    <property type="chains" value="61/69=1-148"/>
</dbReference>
<dbReference type="PDB" id="4WT1">
    <property type="method" value="X-ray"/>
    <property type="resolution" value="3.05 A"/>
    <property type="chains" value="61/69=1-148"/>
</dbReference>
<dbReference type="PDB" id="4WT8">
    <property type="method" value="X-ray"/>
    <property type="resolution" value="3.40 A"/>
    <property type="chains" value="CI/DI=1-145"/>
</dbReference>
<dbReference type="PDB" id="4WU1">
    <property type="method" value="X-ray"/>
    <property type="resolution" value="3.20 A"/>
    <property type="chains" value="61/69=1-148"/>
</dbReference>
<dbReference type="PDB" id="4WZD">
    <property type="method" value="X-ray"/>
    <property type="resolution" value="3.10 A"/>
    <property type="chains" value="61/69=1-148"/>
</dbReference>
<dbReference type="PDB" id="4WZO">
    <property type="method" value="X-ray"/>
    <property type="resolution" value="3.30 A"/>
    <property type="chains" value="61/69=1-148"/>
</dbReference>
<dbReference type="PDB" id="4Y4O">
    <property type="method" value="X-ray"/>
    <property type="resolution" value="2.30 A"/>
    <property type="chains" value="1I/2I=1-148"/>
</dbReference>
<dbReference type="PDB" id="4Y4P">
    <property type="method" value="X-ray"/>
    <property type="resolution" value="2.50 A"/>
    <property type="chains" value="1I/2I=1-148"/>
</dbReference>
<dbReference type="PDB" id="4YPB">
    <property type="method" value="X-ray"/>
    <property type="resolution" value="3.40 A"/>
    <property type="chains" value="RI/YI=1-148"/>
</dbReference>
<dbReference type="PDB" id="4YZV">
    <property type="method" value="X-ray"/>
    <property type="resolution" value="3.10 A"/>
    <property type="chains" value="RI/YI=1-148"/>
</dbReference>
<dbReference type="PDB" id="4Z3S">
    <property type="method" value="X-ray"/>
    <property type="resolution" value="2.65 A"/>
    <property type="chains" value="1I/2I=1-148"/>
</dbReference>
<dbReference type="PDB" id="4Z8C">
    <property type="method" value="X-ray"/>
    <property type="resolution" value="2.90 A"/>
    <property type="chains" value="1I/2I=1-148"/>
</dbReference>
<dbReference type="PDB" id="4ZER">
    <property type="method" value="X-ray"/>
    <property type="resolution" value="3.10 A"/>
    <property type="chains" value="1I/2I=1-147"/>
</dbReference>
<dbReference type="PDB" id="4ZSN">
    <property type="method" value="X-ray"/>
    <property type="resolution" value="3.60 A"/>
    <property type="chains" value="RI/YI=1-148"/>
</dbReference>
<dbReference type="PDB" id="5CZP">
    <property type="method" value="X-ray"/>
    <property type="resolution" value="3.30 A"/>
    <property type="chains" value="RI/YI=1-148"/>
</dbReference>
<dbReference type="PDB" id="5D8B">
    <property type="method" value="X-ray"/>
    <property type="resolution" value="3.63 A"/>
    <property type="chains" value="BB/F=1-148"/>
</dbReference>
<dbReference type="PDB" id="5DFE">
    <property type="method" value="X-ray"/>
    <property type="resolution" value="3.10 A"/>
    <property type="chains" value="RI/YI=1-148"/>
</dbReference>
<dbReference type="PDB" id="5DOX">
    <property type="method" value="X-ray"/>
    <property type="resolution" value="3.10 A"/>
    <property type="chains" value="1I/2I=1-148"/>
</dbReference>
<dbReference type="PDB" id="5DOY">
    <property type="method" value="X-ray"/>
    <property type="resolution" value="2.60 A"/>
    <property type="chains" value="1I/2I=1-148"/>
</dbReference>
<dbReference type="PDB" id="5E7K">
    <property type="method" value="X-ray"/>
    <property type="resolution" value="3.20 A"/>
    <property type="chains" value="61/69=1-148"/>
</dbReference>
<dbReference type="PDB" id="5E81">
    <property type="method" value="X-ray"/>
    <property type="resolution" value="2.95 A"/>
    <property type="chains" value="61/69=1-148"/>
</dbReference>
<dbReference type="PDB" id="5EL4">
    <property type="method" value="X-ray"/>
    <property type="resolution" value="3.15 A"/>
    <property type="chains" value="61/69=1-148"/>
</dbReference>
<dbReference type="PDB" id="5EL5">
    <property type="method" value="X-ray"/>
    <property type="resolution" value="3.15 A"/>
    <property type="chains" value="61/69=1-148"/>
</dbReference>
<dbReference type="PDB" id="5EL6">
    <property type="method" value="X-ray"/>
    <property type="resolution" value="3.10 A"/>
    <property type="chains" value="61/69=1-148"/>
</dbReference>
<dbReference type="PDB" id="5EL7">
    <property type="method" value="X-ray"/>
    <property type="resolution" value="3.15 A"/>
    <property type="chains" value="61/69=1-148"/>
</dbReference>
<dbReference type="PDB" id="5F8K">
    <property type="method" value="X-ray"/>
    <property type="resolution" value="2.80 A"/>
    <property type="chains" value="1I/2I=1-147"/>
</dbReference>
<dbReference type="PDB" id="5FDU">
    <property type="method" value="X-ray"/>
    <property type="resolution" value="2.90 A"/>
    <property type="chains" value="1I/2I=1-147"/>
</dbReference>
<dbReference type="PDB" id="5FDV">
    <property type="method" value="X-ray"/>
    <property type="resolution" value="2.80 A"/>
    <property type="chains" value="1I/2I=1-147"/>
</dbReference>
<dbReference type="PDB" id="5HAU">
    <property type="method" value="X-ray"/>
    <property type="resolution" value="3.00 A"/>
    <property type="chains" value="1z/2z=1-74"/>
</dbReference>
<dbReference type="PDB" id="5HCP">
    <property type="method" value="X-ray"/>
    <property type="resolution" value="2.89 A"/>
    <property type="chains" value="1I/2I=1-148"/>
</dbReference>
<dbReference type="PDB" id="5HCQ">
    <property type="method" value="X-ray"/>
    <property type="resolution" value="2.80 A"/>
    <property type="chains" value="1I/2I=1-148"/>
</dbReference>
<dbReference type="PDB" id="5HCR">
    <property type="method" value="X-ray"/>
    <property type="resolution" value="2.80 A"/>
    <property type="chains" value="1I/2I=1-148"/>
</dbReference>
<dbReference type="PDB" id="5HD1">
    <property type="method" value="X-ray"/>
    <property type="resolution" value="2.70 A"/>
    <property type="chains" value="1I/2I=1-148"/>
</dbReference>
<dbReference type="PDB" id="5IB7">
    <property type="method" value="X-ray"/>
    <property type="resolution" value="2.99 A"/>
    <property type="chains" value="61/69=1-148"/>
</dbReference>
<dbReference type="PDB" id="5IB8">
    <property type="method" value="X-ray"/>
    <property type="resolution" value="3.13 A"/>
    <property type="chains" value="61/69=1-148"/>
</dbReference>
<dbReference type="PDB" id="5IBB">
    <property type="method" value="X-ray"/>
    <property type="resolution" value="2.96 A"/>
    <property type="chains" value="61/69=1-148"/>
</dbReference>
<dbReference type="PDB" id="5J30">
    <property type="method" value="X-ray"/>
    <property type="resolution" value="3.20 A"/>
    <property type="chains" value="RI/YI=1-148"/>
</dbReference>
<dbReference type="PDB" id="5J3C">
    <property type="method" value="X-ray"/>
    <property type="resolution" value="3.04 A"/>
    <property type="chains" value="RI/YI=1-148"/>
</dbReference>
<dbReference type="PDB" id="5J4B">
    <property type="method" value="X-ray"/>
    <property type="resolution" value="2.60 A"/>
    <property type="chains" value="1I/2I=1-148"/>
</dbReference>
<dbReference type="PDB" id="5J4C">
    <property type="method" value="X-ray"/>
    <property type="resolution" value="2.80 A"/>
    <property type="chains" value="1I/2I=1-148"/>
</dbReference>
<dbReference type="PDB" id="5J8B">
    <property type="method" value="X-ray"/>
    <property type="resolution" value="2.60 A"/>
    <property type="chains" value="z=1-74"/>
</dbReference>
<dbReference type="PDB" id="5NDJ">
    <property type="method" value="X-ray"/>
    <property type="resolution" value="3.15 A"/>
    <property type="chains" value="61/69=1-148"/>
</dbReference>
<dbReference type="PDB" id="5NDK">
    <property type="method" value="X-ray"/>
    <property type="resolution" value="2.95 A"/>
    <property type="chains" value="61/69=1-148"/>
</dbReference>
<dbReference type="PDB" id="5OT7">
    <property type="method" value="EM"/>
    <property type="resolution" value="3.80 A"/>
    <property type="chains" value="7=1-146"/>
</dbReference>
<dbReference type="PDB" id="5UQ7">
    <property type="method" value="EM"/>
    <property type="resolution" value="3.50 A"/>
    <property type="chains" value="I=1-146"/>
</dbReference>
<dbReference type="PDB" id="5UQ8">
    <property type="method" value="EM"/>
    <property type="resolution" value="3.20 A"/>
    <property type="chains" value="I=1-146"/>
</dbReference>
<dbReference type="PDB" id="5VP2">
    <property type="method" value="X-ray"/>
    <property type="resolution" value="2.80 A"/>
    <property type="chains" value="1I/2I=1-148"/>
</dbReference>
<dbReference type="PDB" id="5VPO">
    <property type="method" value="X-ray"/>
    <property type="resolution" value="3.34 A"/>
    <property type="chains" value="RI/YI=1-148"/>
</dbReference>
<dbReference type="PDB" id="5VPP">
    <property type="method" value="X-ray"/>
    <property type="resolution" value="3.90 A"/>
    <property type="chains" value="RI/YI=1-148"/>
</dbReference>
<dbReference type="PDB" id="5W4K">
    <property type="method" value="X-ray"/>
    <property type="resolution" value="2.70 A"/>
    <property type="chains" value="1I/2I=1-148"/>
</dbReference>
<dbReference type="PDB" id="5WIS">
    <property type="method" value="X-ray"/>
    <property type="resolution" value="2.70 A"/>
    <property type="chains" value="1I/2I=1-148"/>
</dbReference>
<dbReference type="PDB" id="5WIT">
    <property type="method" value="X-ray"/>
    <property type="resolution" value="2.60 A"/>
    <property type="chains" value="1I/2I=1-148"/>
</dbReference>
<dbReference type="PDB" id="6BUW">
    <property type="method" value="X-ray"/>
    <property type="resolution" value="3.50 A"/>
    <property type="chains" value="RI/YI=1-148"/>
</dbReference>
<dbReference type="PDB" id="6BZ6">
    <property type="method" value="X-ray"/>
    <property type="resolution" value="3.18 A"/>
    <property type="chains" value="RI/YI=1-148"/>
</dbReference>
<dbReference type="PDB" id="6BZ7">
    <property type="method" value="X-ray"/>
    <property type="resolution" value="3.68 A"/>
    <property type="chains" value="RI/YI=1-148"/>
</dbReference>
<dbReference type="PDB" id="6BZ8">
    <property type="method" value="X-ray"/>
    <property type="resolution" value="3.74 A"/>
    <property type="chains" value="RI/YI=1-148"/>
</dbReference>
<dbReference type="PDB" id="6C5L">
    <property type="method" value="X-ray"/>
    <property type="resolution" value="3.20 A"/>
    <property type="chains" value="BI/DI=1-148"/>
</dbReference>
<dbReference type="PDB" id="6CAE">
    <property type="method" value="X-ray"/>
    <property type="resolution" value="2.60 A"/>
    <property type="chains" value="1I/2I=1-148"/>
</dbReference>
<dbReference type="PDB" id="6CFJ">
    <property type="method" value="X-ray"/>
    <property type="resolution" value="2.80 A"/>
    <property type="chains" value="1I/2I=1-148"/>
</dbReference>
<dbReference type="PDB" id="6CFK">
    <property type="method" value="X-ray"/>
    <property type="resolution" value="2.70 A"/>
    <property type="chains" value="1I/2I=1-148"/>
</dbReference>
<dbReference type="PDB" id="6CFL">
    <property type="method" value="X-ray"/>
    <property type="resolution" value="2.60 A"/>
    <property type="chains" value="1I/2I=1-148"/>
</dbReference>
<dbReference type="PDB" id="6CZR">
    <property type="method" value="X-ray"/>
    <property type="resolution" value="3.14 A"/>
    <property type="chains" value="1I/2I=1-147"/>
</dbReference>
<dbReference type="PDB" id="6FKR">
    <property type="method" value="X-ray"/>
    <property type="resolution" value="3.20 A"/>
    <property type="chains" value="1I/2I=1-147"/>
</dbReference>
<dbReference type="PDB" id="6GSJ">
    <property type="method" value="X-ray"/>
    <property type="resolution" value="2.96 A"/>
    <property type="chains" value="61/69=1-148"/>
</dbReference>
<dbReference type="PDB" id="6GSK">
    <property type="method" value="X-ray"/>
    <property type="resolution" value="3.36 A"/>
    <property type="chains" value="61/69=1-148"/>
</dbReference>
<dbReference type="PDB" id="6GSL">
    <property type="method" value="X-ray"/>
    <property type="resolution" value="3.16 A"/>
    <property type="chains" value="61/69=1-148"/>
</dbReference>
<dbReference type="PDB" id="6GZQ">
    <property type="method" value="EM"/>
    <property type="resolution" value="3.28 A"/>
    <property type="chains" value="H1=1-50"/>
</dbReference>
<dbReference type="PDB" id="6GZX">
    <property type="method" value="EM"/>
    <property type="resolution" value="4.57 A"/>
    <property type="chains" value="H1/H2=1-50"/>
</dbReference>
<dbReference type="PDB" id="6GZZ">
    <property type="method" value="EM"/>
    <property type="resolution" value="4.13 A"/>
    <property type="chains" value="H1/H2=1-50"/>
</dbReference>
<dbReference type="PDB" id="6N9E">
    <property type="method" value="X-ray"/>
    <property type="resolution" value="3.70 A"/>
    <property type="chains" value="1I/2I=1-148"/>
</dbReference>
<dbReference type="PDB" id="6N9F">
    <property type="method" value="X-ray"/>
    <property type="resolution" value="3.70 A"/>
    <property type="chains" value="1I/2I=1-148"/>
</dbReference>
<dbReference type="PDB" id="6ND5">
    <property type="method" value="X-ray"/>
    <property type="resolution" value="2.60 A"/>
    <property type="chains" value="1I/2I=1-148"/>
</dbReference>
<dbReference type="PDB" id="6ND6">
    <property type="method" value="X-ray"/>
    <property type="resolution" value="2.85 A"/>
    <property type="chains" value="1I/2I=1-148"/>
</dbReference>
<dbReference type="PDB" id="6NDK">
    <property type="method" value="X-ray"/>
    <property type="resolution" value="3.64 A"/>
    <property type="chains" value="RI/YI=1-148"/>
</dbReference>
<dbReference type="PDB" id="6NSH">
    <property type="method" value="X-ray"/>
    <property type="resolution" value="3.40 A"/>
    <property type="chains" value="RI/YI=1-148"/>
</dbReference>
<dbReference type="PDB" id="6NTA">
    <property type="method" value="X-ray"/>
    <property type="resolution" value="3.10 A"/>
    <property type="chains" value="RI/YI=1-148"/>
</dbReference>
<dbReference type="PDB" id="6NUO">
    <property type="method" value="X-ray"/>
    <property type="resolution" value="3.20 A"/>
    <property type="chains" value="RI/YI=1-148"/>
</dbReference>
<dbReference type="PDB" id="6NWY">
    <property type="method" value="X-ray"/>
    <property type="resolution" value="3.50 A"/>
    <property type="chains" value="RI/YI=1-148"/>
</dbReference>
<dbReference type="PDB" id="6O3M">
    <property type="method" value="X-ray"/>
    <property type="resolution" value="3.97 A"/>
    <property type="chains" value="RI/YI=1-148"/>
</dbReference>
<dbReference type="PDB" id="6O97">
    <property type="method" value="X-ray"/>
    <property type="resolution" value="2.75 A"/>
    <property type="chains" value="1I/2I=1-148"/>
</dbReference>
<dbReference type="PDB" id="6OF1">
    <property type="method" value="X-ray"/>
    <property type="resolution" value="2.80 A"/>
    <property type="chains" value="1I/2I=1-148"/>
</dbReference>
<dbReference type="PDB" id="6OF6">
    <property type="method" value="X-ray"/>
    <property type="resolution" value="3.20 A"/>
    <property type="chains" value="RI/YI=1-148"/>
</dbReference>
<dbReference type="PDB" id="6OJ2">
    <property type="method" value="X-ray"/>
    <property type="resolution" value="3.20 A"/>
    <property type="chains" value="RI/YI=1-148"/>
</dbReference>
<dbReference type="PDB" id="6OPE">
    <property type="method" value="X-ray"/>
    <property type="resolution" value="3.10 A"/>
    <property type="chains" value="RI/YI=1-148"/>
</dbReference>
<dbReference type="PDB" id="6ORD">
    <property type="method" value="X-ray"/>
    <property type="resolution" value="3.10 A"/>
    <property type="chains" value="RI/YI=1-148"/>
</dbReference>
<dbReference type="PDB" id="6OSI">
    <property type="method" value="X-ray"/>
    <property type="resolution" value="4.14 A"/>
    <property type="chains" value="RI/YI=1-148"/>
</dbReference>
<dbReference type="PDB" id="6OTR">
    <property type="method" value="X-ray"/>
    <property type="resolution" value="3.12 A"/>
    <property type="chains" value="RI/YI=1-148"/>
</dbReference>
<dbReference type="PDB" id="6OXA">
    <property type="method" value="X-ray"/>
    <property type="resolution" value="3.25 A"/>
    <property type="chains" value="RI/YI=1-148"/>
</dbReference>
<dbReference type="PDB" id="6OXI">
    <property type="method" value="X-ray"/>
    <property type="resolution" value="3.50 A"/>
    <property type="chains" value="RI/YI=1-148"/>
</dbReference>
<dbReference type="PDB" id="6Q95">
    <property type="method" value="EM"/>
    <property type="resolution" value="3.70 A"/>
    <property type="chains" value="G=1-60"/>
</dbReference>
<dbReference type="PDB" id="6QNQ">
    <property type="method" value="X-ray"/>
    <property type="resolution" value="3.50 A"/>
    <property type="chains" value="61/69=1-148"/>
</dbReference>
<dbReference type="PDB" id="6QNR">
    <property type="method" value="X-ray"/>
    <property type="resolution" value="3.10 A"/>
    <property type="chains" value="61/69=1-148"/>
</dbReference>
<dbReference type="PDB" id="6UCQ">
    <property type="method" value="X-ray"/>
    <property type="resolution" value="3.50 A"/>
    <property type="chains" value="1v/2v=1-74"/>
</dbReference>
<dbReference type="PDB" id="6UO1">
    <property type="method" value="X-ray"/>
    <property type="resolution" value="2.95 A"/>
    <property type="chains" value="1I/2I=1-148"/>
</dbReference>
<dbReference type="PDB" id="6XHV">
    <property type="method" value="X-ray"/>
    <property type="resolution" value="2.40 A"/>
    <property type="chains" value="1I/2I=1-148"/>
</dbReference>
<dbReference type="PDB" id="6XHW">
    <property type="method" value="X-ray"/>
    <property type="resolution" value="2.50 A"/>
    <property type="chains" value="1I/2I=1-148"/>
</dbReference>
<dbReference type="PDB" id="6XHX">
    <property type="method" value="X-ray"/>
    <property type="resolution" value="2.55 A"/>
    <property type="chains" value="1I/2I=1-148"/>
</dbReference>
<dbReference type="PDB" id="6XHY">
    <property type="method" value="X-ray"/>
    <property type="resolution" value="2.60 A"/>
    <property type="chains" value="1I/2I=1-148"/>
</dbReference>
<dbReference type="PDB" id="6XQD">
    <property type="method" value="X-ray"/>
    <property type="resolution" value="2.80 A"/>
    <property type="chains" value="1I/2I=1-148"/>
</dbReference>
<dbReference type="PDB" id="6XQE">
    <property type="method" value="X-ray"/>
    <property type="resolution" value="3.00 A"/>
    <property type="chains" value="1I/2I=1-148"/>
</dbReference>
<dbReference type="PDB" id="7AZO">
    <property type="method" value="X-ray"/>
    <property type="resolution" value="3.30 A"/>
    <property type="chains" value="L9A/L9B=1-148"/>
</dbReference>
<dbReference type="PDB" id="7AZS">
    <property type="method" value="X-ray"/>
    <property type="resolution" value="3.10 A"/>
    <property type="chains" value="L9A/L9B=1-148"/>
</dbReference>
<dbReference type="PDB" id="7JQL">
    <property type="method" value="X-ray"/>
    <property type="resolution" value="3.00 A"/>
    <property type="chains" value="1I/2I=1-148"/>
</dbReference>
<dbReference type="PDB" id="7JQM">
    <property type="method" value="X-ray"/>
    <property type="resolution" value="3.05 A"/>
    <property type="chains" value="1I/2I=1-148"/>
</dbReference>
<dbReference type="PDB" id="7LH5">
    <property type="method" value="X-ray"/>
    <property type="resolution" value="3.27 A"/>
    <property type="chains" value="BI/DI=1-148"/>
</dbReference>
<dbReference type="PDB" id="7MD7">
    <property type="method" value="X-ray"/>
    <property type="resolution" value="2.80 A"/>
    <property type="chains" value="1I/2I=1-148"/>
</dbReference>
<dbReference type="PDB" id="7RQ8">
    <property type="method" value="X-ray"/>
    <property type="resolution" value="2.50 A"/>
    <property type="chains" value="1I/2I=1-148"/>
</dbReference>
<dbReference type="PDB" id="7RQ9">
    <property type="method" value="X-ray"/>
    <property type="resolution" value="2.60 A"/>
    <property type="chains" value="1I/2I=1-148"/>
</dbReference>
<dbReference type="PDB" id="7RQA">
    <property type="method" value="X-ray"/>
    <property type="resolution" value="2.40 A"/>
    <property type="chains" value="1I/2I=1-148"/>
</dbReference>
<dbReference type="PDB" id="7RQB">
    <property type="method" value="X-ray"/>
    <property type="resolution" value="2.45 A"/>
    <property type="chains" value="1I/2I=1-148"/>
</dbReference>
<dbReference type="PDB" id="7RQC">
    <property type="method" value="X-ray"/>
    <property type="resolution" value="2.50 A"/>
    <property type="chains" value="1I/2I=1-148"/>
</dbReference>
<dbReference type="PDB" id="7RQD">
    <property type="method" value="X-ray"/>
    <property type="resolution" value="2.50 A"/>
    <property type="chains" value="1I/2I=1-148"/>
</dbReference>
<dbReference type="PDB" id="7RQE">
    <property type="method" value="X-ray"/>
    <property type="resolution" value="2.40 A"/>
    <property type="chains" value="1I/2I=1-148"/>
</dbReference>
<dbReference type="PDB" id="7U2H">
    <property type="method" value="X-ray"/>
    <property type="resolution" value="2.55 A"/>
    <property type="chains" value="1I/2I=1-148"/>
</dbReference>
<dbReference type="PDB" id="7U2I">
    <property type="method" value="X-ray"/>
    <property type="resolution" value="2.55 A"/>
    <property type="chains" value="1I/2I=1-148"/>
</dbReference>
<dbReference type="PDB" id="7U2J">
    <property type="method" value="X-ray"/>
    <property type="resolution" value="2.55 A"/>
    <property type="chains" value="1I/2I=1-148"/>
</dbReference>
<dbReference type="PDB" id="8CVJ">
    <property type="method" value="X-ray"/>
    <property type="resolution" value="2.40 A"/>
    <property type="chains" value="1I/2I=1-148"/>
</dbReference>
<dbReference type="PDB" id="8CVK">
    <property type="method" value="X-ray"/>
    <property type="resolution" value="2.50 A"/>
    <property type="chains" value="1I/2I=1-148"/>
</dbReference>
<dbReference type="PDB" id="8CVL">
    <property type="method" value="X-ray"/>
    <property type="resolution" value="2.30 A"/>
    <property type="chains" value="1I/2I=1-148"/>
</dbReference>
<dbReference type="PDB" id="8EKB">
    <property type="method" value="X-ray"/>
    <property type="resolution" value="2.70 A"/>
    <property type="chains" value="1I/2I=1-148"/>
</dbReference>
<dbReference type="PDB" id="8EV6">
    <property type="method" value="X-ray"/>
    <property type="resolution" value="2.95 A"/>
    <property type="chains" value="1I/2I=1-148"/>
</dbReference>
<dbReference type="PDB" id="8EV7">
    <property type="method" value="X-ray"/>
    <property type="resolution" value="2.89 A"/>
    <property type="chains" value="1I/2I=1-148"/>
</dbReference>
<dbReference type="PDB" id="8FC1">
    <property type="method" value="X-ray"/>
    <property type="resolution" value="2.50 A"/>
    <property type="chains" value="1I/2I=1-148"/>
</dbReference>
<dbReference type="PDB" id="8FC2">
    <property type="method" value="X-ray"/>
    <property type="resolution" value="2.50 A"/>
    <property type="chains" value="1I/2I=1-148"/>
</dbReference>
<dbReference type="PDB" id="8FC3">
    <property type="method" value="X-ray"/>
    <property type="resolution" value="2.60 A"/>
    <property type="chains" value="1I/2I=1-148"/>
</dbReference>
<dbReference type="PDB" id="8FC4">
    <property type="method" value="X-ray"/>
    <property type="resolution" value="2.45 A"/>
    <property type="chains" value="1I/2I=1-148"/>
</dbReference>
<dbReference type="PDB" id="8FC5">
    <property type="method" value="X-ray"/>
    <property type="resolution" value="2.65 A"/>
    <property type="chains" value="1I/2I=1-148"/>
</dbReference>
<dbReference type="PDB" id="8FC6">
    <property type="method" value="X-ray"/>
    <property type="resolution" value="2.35 A"/>
    <property type="chains" value="1I/2I=1-148"/>
</dbReference>
<dbReference type="PDB" id="8FOM">
    <property type="method" value="X-ray"/>
    <property type="resolution" value="3.58 A"/>
    <property type="chains" value="RI/YI=1-148"/>
</dbReference>
<dbReference type="PDB" id="8FON">
    <property type="method" value="X-ray"/>
    <property type="resolution" value="3.64 A"/>
    <property type="chains" value="RI/YI=1-148"/>
</dbReference>
<dbReference type="PDB" id="8G29">
    <property type="method" value="X-ray"/>
    <property type="resolution" value="2.55 A"/>
    <property type="chains" value="1I/2I=1-148"/>
</dbReference>
<dbReference type="PDB" id="8G2A">
    <property type="method" value="X-ray"/>
    <property type="resolution" value="2.45 A"/>
    <property type="chains" value="1I/2I=1-148"/>
</dbReference>
<dbReference type="PDB" id="8G2B">
    <property type="method" value="X-ray"/>
    <property type="resolution" value="2.55 A"/>
    <property type="chains" value="1I/2I=1-148"/>
</dbReference>
<dbReference type="PDB" id="8G2C">
    <property type="method" value="X-ray"/>
    <property type="resolution" value="2.65 A"/>
    <property type="chains" value="1I/2I=1-148"/>
</dbReference>
<dbReference type="PDB" id="8G2D">
    <property type="method" value="X-ray"/>
    <property type="resolution" value="2.70 A"/>
    <property type="chains" value="1I/2I=1-148"/>
</dbReference>
<dbReference type="PDB" id="8T8B">
    <property type="method" value="X-ray"/>
    <property type="resolution" value="2.65 A"/>
    <property type="chains" value="1I/2I=1-148"/>
</dbReference>
<dbReference type="PDB" id="8T8C">
    <property type="method" value="X-ray"/>
    <property type="resolution" value="2.60 A"/>
    <property type="chains" value="1I/2I=1-148"/>
</dbReference>
<dbReference type="PDB" id="8UD6">
    <property type="method" value="X-ray"/>
    <property type="resolution" value="2.70 A"/>
    <property type="chains" value="1I/2I=1-148"/>
</dbReference>
<dbReference type="PDB" id="8UD7">
    <property type="method" value="X-ray"/>
    <property type="resolution" value="2.55 A"/>
    <property type="chains" value="1I/2I=1-148"/>
</dbReference>
<dbReference type="PDB" id="8UD8">
    <property type="method" value="X-ray"/>
    <property type="resolution" value="2.60 A"/>
    <property type="chains" value="1I/2I=1-148"/>
</dbReference>
<dbReference type="PDB" id="8UVR">
    <property type="method" value="X-ray"/>
    <property type="resolution" value="2.60 A"/>
    <property type="chains" value="1I/2I=1-148"/>
</dbReference>
<dbReference type="PDB" id="8UVS">
    <property type="method" value="X-ray"/>
    <property type="resolution" value="2.75 A"/>
    <property type="chains" value="1I/2I=1-148"/>
</dbReference>
<dbReference type="PDB" id="8VTU">
    <property type="method" value="X-ray"/>
    <property type="resolution" value="2.40 A"/>
    <property type="chains" value="1I/2I=1-148"/>
</dbReference>
<dbReference type="PDB" id="8VTV">
    <property type="method" value="X-ray"/>
    <property type="resolution" value="2.55 A"/>
    <property type="chains" value="1I/2I=1-148"/>
</dbReference>
<dbReference type="PDB" id="8VTW">
    <property type="method" value="X-ray"/>
    <property type="resolution" value="2.35 A"/>
    <property type="chains" value="1I/2I=1-148"/>
</dbReference>
<dbReference type="PDB" id="8VTX">
    <property type="method" value="X-ray"/>
    <property type="resolution" value="2.40 A"/>
    <property type="chains" value="1I/2I=1-148"/>
</dbReference>
<dbReference type="PDB" id="8VTY">
    <property type="method" value="X-ray"/>
    <property type="resolution" value="2.60 A"/>
    <property type="chains" value="1I/2I=1-148"/>
</dbReference>
<dbReference type="PDB" id="8WV1">
    <property type="method" value="X-ray"/>
    <property type="resolution" value="3.99 A"/>
    <property type="chains" value="H/h=1-148"/>
</dbReference>
<dbReference type="PDB" id="9B00">
    <property type="method" value="X-ray"/>
    <property type="resolution" value="2.80 A"/>
    <property type="chains" value="1I/2I=1-148"/>
</dbReference>
<dbReference type="PDB" id="9D0J">
    <property type="method" value="X-ray"/>
    <property type="resolution" value="2.50 A"/>
    <property type="chains" value="1I/2I=1-148"/>
</dbReference>
<dbReference type="PDB" id="9D7R">
    <property type="method" value="X-ray"/>
    <property type="resolution" value="2.70 A"/>
    <property type="chains" value="1I/2I=1-148"/>
</dbReference>
<dbReference type="PDB" id="9D7S">
    <property type="method" value="X-ray"/>
    <property type="resolution" value="2.85 A"/>
    <property type="chains" value="1I/2I=1-148"/>
</dbReference>
<dbReference type="PDB" id="9D7T">
    <property type="method" value="X-ray"/>
    <property type="resolution" value="2.70 A"/>
    <property type="chains" value="1I/2I=1-148"/>
</dbReference>
<dbReference type="PDB" id="9DFC">
    <property type="method" value="X-ray"/>
    <property type="resolution" value="2.50 A"/>
    <property type="chains" value="1I/2I=1-148"/>
</dbReference>
<dbReference type="PDB" id="9DFD">
    <property type="method" value="X-ray"/>
    <property type="resolution" value="2.60 A"/>
    <property type="chains" value="1I/2I=1-148"/>
</dbReference>
<dbReference type="PDB" id="9DFE">
    <property type="method" value="X-ray"/>
    <property type="resolution" value="2.60 A"/>
    <property type="chains" value="1I/2I=1-148"/>
</dbReference>
<dbReference type="PDBsum" id="1VVJ"/>
<dbReference type="PDBsum" id="1VY4"/>
<dbReference type="PDBsum" id="1VY5"/>
<dbReference type="PDBsum" id="1VY6"/>
<dbReference type="PDBsum" id="1VY7"/>
<dbReference type="PDBsum" id="4L47"/>
<dbReference type="PDBsum" id="4L71"/>
<dbReference type="PDBsum" id="4LEL"/>
<dbReference type="PDBsum" id="4LFZ"/>
<dbReference type="PDBsum" id="4LNT"/>
<dbReference type="PDBsum" id="4LSK"/>
<dbReference type="PDBsum" id="4LT8"/>
<dbReference type="PDBsum" id="4P6F"/>
<dbReference type="PDBsum" id="4P70"/>
<dbReference type="PDBsum" id="4TUA"/>
<dbReference type="PDBsum" id="4TUB"/>
<dbReference type="PDBsum" id="4TUC"/>
<dbReference type="PDBsum" id="4TUD"/>
<dbReference type="PDBsum" id="4TUE"/>
<dbReference type="PDBsum" id="4V42"/>
<dbReference type="PDBsum" id="4V4P"/>
<dbReference type="PDBsum" id="4V4X"/>
<dbReference type="PDBsum" id="4V4Y"/>
<dbReference type="PDBsum" id="4V4Z"/>
<dbReference type="PDBsum" id="4V51"/>
<dbReference type="PDBsum" id="4V5A"/>
<dbReference type="PDBsum" id="4V5C"/>
<dbReference type="PDBsum" id="4V5D"/>
<dbReference type="PDBsum" id="4V5E"/>
<dbReference type="PDBsum" id="4V5J"/>
<dbReference type="PDBsum" id="4V5K"/>
<dbReference type="PDBsum" id="4V67"/>
<dbReference type="PDBsum" id="4V68"/>
<dbReference type="PDBsum" id="4V6A"/>
<dbReference type="PDBsum" id="4V6F"/>
<dbReference type="PDBsum" id="4V6G"/>
<dbReference type="PDBsum" id="4V7J"/>
<dbReference type="PDBsum" id="4V7K"/>
<dbReference type="PDBsum" id="4V7L"/>
<dbReference type="PDBsum" id="4V7M"/>
<dbReference type="PDBsum" id="4V7W"/>
<dbReference type="PDBsum" id="4V7X"/>
<dbReference type="PDBsum" id="4V7Y"/>
<dbReference type="PDBsum" id="4V7Z"/>
<dbReference type="PDBsum" id="4V87"/>
<dbReference type="PDBsum" id="4V8A"/>
<dbReference type="PDBsum" id="4V8B"/>
<dbReference type="PDBsum" id="4V8C"/>
<dbReference type="PDBsum" id="4V8D"/>
<dbReference type="PDBsum" id="4V8E"/>
<dbReference type="PDBsum" id="4V8F"/>
<dbReference type="PDBsum" id="4V8G"/>
<dbReference type="PDBsum" id="4V8H"/>
<dbReference type="PDBsum" id="4V8I"/>
<dbReference type="PDBsum" id="4V8J"/>
<dbReference type="PDBsum" id="4V8N"/>
<dbReference type="PDBsum" id="4V8X"/>
<dbReference type="PDBsum" id="4V95"/>
<dbReference type="PDBsum" id="4V97"/>
<dbReference type="PDBsum" id="4V9A"/>
<dbReference type="PDBsum" id="4V9B"/>
<dbReference type="PDBsum" id="4V9I"/>
<dbReference type="PDBsum" id="4V9R"/>
<dbReference type="PDBsum" id="4V9S"/>
<dbReference type="PDBsum" id="4W2E"/>
<dbReference type="PDBsum" id="4W2F"/>
<dbReference type="PDBsum" id="4W2G"/>
<dbReference type="PDBsum" id="4W2H"/>
<dbReference type="PDBsum" id="4W2I"/>
<dbReference type="PDBsum" id="4W4G"/>
<dbReference type="PDBsum" id="4WPO"/>
<dbReference type="PDBsum" id="4WQ1"/>
<dbReference type="PDBsum" id="4WQF"/>
<dbReference type="PDBsum" id="4WQR"/>
<dbReference type="PDBsum" id="4WQU"/>
<dbReference type="PDBsum" id="4WQY"/>
<dbReference type="PDBsum" id="4WR6"/>
<dbReference type="PDBsum" id="4WRA"/>
<dbReference type="PDBsum" id="4WRO"/>
<dbReference type="PDBsum" id="4WSD"/>
<dbReference type="PDBsum" id="4WSM"/>
<dbReference type="PDBsum" id="4WT1"/>
<dbReference type="PDBsum" id="4WT8"/>
<dbReference type="PDBsum" id="4WU1"/>
<dbReference type="PDBsum" id="4WZD"/>
<dbReference type="PDBsum" id="4WZO"/>
<dbReference type="PDBsum" id="4Y4O"/>
<dbReference type="PDBsum" id="4Y4P"/>
<dbReference type="PDBsum" id="4YPB"/>
<dbReference type="PDBsum" id="4YZV"/>
<dbReference type="PDBsum" id="4Z3S"/>
<dbReference type="PDBsum" id="4Z8C"/>
<dbReference type="PDBsum" id="4ZER"/>
<dbReference type="PDBsum" id="4ZSN"/>
<dbReference type="PDBsum" id="5CZP"/>
<dbReference type="PDBsum" id="5D8B"/>
<dbReference type="PDBsum" id="5DFE"/>
<dbReference type="PDBsum" id="5DOX"/>
<dbReference type="PDBsum" id="5DOY"/>
<dbReference type="PDBsum" id="5E7K"/>
<dbReference type="PDBsum" id="5E81"/>
<dbReference type="PDBsum" id="5EL4"/>
<dbReference type="PDBsum" id="5EL5"/>
<dbReference type="PDBsum" id="5EL6"/>
<dbReference type="PDBsum" id="5EL7"/>
<dbReference type="PDBsum" id="5F8K"/>
<dbReference type="PDBsum" id="5FDU"/>
<dbReference type="PDBsum" id="5FDV"/>
<dbReference type="PDBsum" id="5HAU"/>
<dbReference type="PDBsum" id="5HCP"/>
<dbReference type="PDBsum" id="5HCQ"/>
<dbReference type="PDBsum" id="5HCR"/>
<dbReference type="PDBsum" id="5HD1"/>
<dbReference type="PDBsum" id="5IB7"/>
<dbReference type="PDBsum" id="5IB8"/>
<dbReference type="PDBsum" id="5IBB"/>
<dbReference type="PDBsum" id="5J30"/>
<dbReference type="PDBsum" id="5J3C"/>
<dbReference type="PDBsum" id="5J4B"/>
<dbReference type="PDBsum" id="5J4C"/>
<dbReference type="PDBsum" id="5J8B"/>
<dbReference type="PDBsum" id="5NDJ"/>
<dbReference type="PDBsum" id="5NDK"/>
<dbReference type="PDBsum" id="5OT7"/>
<dbReference type="PDBsum" id="5UQ7"/>
<dbReference type="PDBsum" id="5UQ8"/>
<dbReference type="PDBsum" id="5VP2"/>
<dbReference type="PDBsum" id="5VPO"/>
<dbReference type="PDBsum" id="5VPP"/>
<dbReference type="PDBsum" id="5W4K"/>
<dbReference type="PDBsum" id="5WIS"/>
<dbReference type="PDBsum" id="5WIT"/>
<dbReference type="PDBsum" id="6BUW"/>
<dbReference type="PDBsum" id="6BZ6"/>
<dbReference type="PDBsum" id="6BZ7"/>
<dbReference type="PDBsum" id="6BZ8"/>
<dbReference type="PDBsum" id="6C5L"/>
<dbReference type="PDBsum" id="6CAE"/>
<dbReference type="PDBsum" id="6CFJ"/>
<dbReference type="PDBsum" id="6CFK"/>
<dbReference type="PDBsum" id="6CFL"/>
<dbReference type="PDBsum" id="6CZR"/>
<dbReference type="PDBsum" id="6FKR"/>
<dbReference type="PDBsum" id="6GSJ"/>
<dbReference type="PDBsum" id="6GSK"/>
<dbReference type="PDBsum" id="6GSL"/>
<dbReference type="PDBsum" id="6GZQ"/>
<dbReference type="PDBsum" id="6GZX"/>
<dbReference type="PDBsum" id="6GZZ"/>
<dbReference type="PDBsum" id="6N9E"/>
<dbReference type="PDBsum" id="6N9F"/>
<dbReference type="PDBsum" id="6ND5"/>
<dbReference type="PDBsum" id="6ND6"/>
<dbReference type="PDBsum" id="6NDK"/>
<dbReference type="PDBsum" id="6NSH"/>
<dbReference type="PDBsum" id="6NTA"/>
<dbReference type="PDBsum" id="6NUO"/>
<dbReference type="PDBsum" id="6NWY"/>
<dbReference type="PDBsum" id="6O3M"/>
<dbReference type="PDBsum" id="6O97"/>
<dbReference type="PDBsum" id="6OF1"/>
<dbReference type="PDBsum" id="6OF6"/>
<dbReference type="PDBsum" id="6OJ2"/>
<dbReference type="PDBsum" id="6OPE"/>
<dbReference type="PDBsum" id="6ORD"/>
<dbReference type="PDBsum" id="6OSI"/>
<dbReference type="PDBsum" id="6OTR"/>
<dbReference type="PDBsum" id="6OXA"/>
<dbReference type="PDBsum" id="6OXI"/>
<dbReference type="PDBsum" id="6Q95"/>
<dbReference type="PDBsum" id="6QNQ"/>
<dbReference type="PDBsum" id="6QNR"/>
<dbReference type="PDBsum" id="6UCQ"/>
<dbReference type="PDBsum" id="6UO1"/>
<dbReference type="PDBsum" id="6XHV"/>
<dbReference type="PDBsum" id="6XHW"/>
<dbReference type="PDBsum" id="6XHX"/>
<dbReference type="PDBsum" id="6XHY"/>
<dbReference type="PDBsum" id="6XQD"/>
<dbReference type="PDBsum" id="6XQE"/>
<dbReference type="PDBsum" id="7AZO"/>
<dbReference type="PDBsum" id="7AZS"/>
<dbReference type="PDBsum" id="7JQL"/>
<dbReference type="PDBsum" id="7JQM"/>
<dbReference type="PDBsum" id="7LH5"/>
<dbReference type="PDBsum" id="7MD7"/>
<dbReference type="PDBsum" id="7RQ8"/>
<dbReference type="PDBsum" id="7RQ9"/>
<dbReference type="PDBsum" id="7RQA"/>
<dbReference type="PDBsum" id="7RQB"/>
<dbReference type="PDBsum" id="7RQC"/>
<dbReference type="PDBsum" id="7RQD"/>
<dbReference type="PDBsum" id="7RQE"/>
<dbReference type="PDBsum" id="7U2H"/>
<dbReference type="PDBsum" id="7U2I"/>
<dbReference type="PDBsum" id="7U2J"/>
<dbReference type="PDBsum" id="8CVJ"/>
<dbReference type="PDBsum" id="8CVK"/>
<dbReference type="PDBsum" id="8CVL"/>
<dbReference type="PDBsum" id="8EKB"/>
<dbReference type="PDBsum" id="8EV6"/>
<dbReference type="PDBsum" id="8EV7"/>
<dbReference type="PDBsum" id="8FC1"/>
<dbReference type="PDBsum" id="8FC2"/>
<dbReference type="PDBsum" id="8FC3"/>
<dbReference type="PDBsum" id="8FC4"/>
<dbReference type="PDBsum" id="8FC5"/>
<dbReference type="PDBsum" id="8FC6"/>
<dbReference type="PDBsum" id="8FOM"/>
<dbReference type="PDBsum" id="8FON"/>
<dbReference type="PDBsum" id="8G29"/>
<dbReference type="PDBsum" id="8G2A"/>
<dbReference type="PDBsum" id="8G2B"/>
<dbReference type="PDBsum" id="8G2C"/>
<dbReference type="PDBsum" id="8G2D"/>
<dbReference type="PDBsum" id="8T8B"/>
<dbReference type="PDBsum" id="8T8C"/>
<dbReference type="PDBsum" id="8UD6"/>
<dbReference type="PDBsum" id="8UD7"/>
<dbReference type="PDBsum" id="8UD8"/>
<dbReference type="PDBsum" id="8UVR"/>
<dbReference type="PDBsum" id="8UVS"/>
<dbReference type="PDBsum" id="8VTU"/>
<dbReference type="PDBsum" id="8VTV"/>
<dbReference type="PDBsum" id="8VTW"/>
<dbReference type="PDBsum" id="8VTX"/>
<dbReference type="PDBsum" id="8VTY"/>
<dbReference type="PDBsum" id="8WV1"/>
<dbReference type="PDBsum" id="9B00"/>
<dbReference type="PDBsum" id="9D0J"/>
<dbReference type="PDBsum" id="9D7R"/>
<dbReference type="PDBsum" id="9D7S"/>
<dbReference type="PDBsum" id="9D7T"/>
<dbReference type="PDBsum" id="9DFC"/>
<dbReference type="PDBsum" id="9DFD"/>
<dbReference type="PDBsum" id="9DFE"/>
<dbReference type="EMDB" id="EMD-0101"/>
<dbReference type="EMDB" id="EMD-0104"/>
<dbReference type="EMDB" id="EMD-0105"/>
<dbReference type="EMDB" id="EMD-3852"/>
<dbReference type="EMDB" id="EMD-4475"/>
<dbReference type="EMDB" id="EMD-8596"/>
<dbReference type="EMDB" id="EMD-8597"/>
<dbReference type="SMR" id="Q5SLQ1"/>
<dbReference type="IntAct" id="Q5SLQ1">
    <property type="interactions" value="4"/>
</dbReference>
<dbReference type="EnsemblBacteria" id="BAD70065">
    <property type="protein sequence ID" value="BAD70065"/>
    <property type="gene ID" value="BAD70065"/>
</dbReference>
<dbReference type="GeneID" id="3168676"/>
<dbReference type="KEGG" id="ttj:TTHA0242"/>
<dbReference type="PATRIC" id="fig|300852.9.peg.242"/>
<dbReference type="eggNOG" id="COG0359">
    <property type="taxonomic scope" value="Bacteria"/>
</dbReference>
<dbReference type="HOGENOM" id="CLU_078938_3_0_0"/>
<dbReference type="PhylomeDB" id="Q5SLQ1"/>
<dbReference type="Proteomes" id="UP000000532">
    <property type="component" value="Chromosome"/>
</dbReference>
<dbReference type="GO" id="GO:1990904">
    <property type="term" value="C:ribonucleoprotein complex"/>
    <property type="evidence" value="ECO:0007669"/>
    <property type="project" value="UniProtKB-KW"/>
</dbReference>
<dbReference type="GO" id="GO:0005840">
    <property type="term" value="C:ribosome"/>
    <property type="evidence" value="ECO:0007669"/>
    <property type="project" value="UniProtKB-KW"/>
</dbReference>
<dbReference type="GO" id="GO:0019843">
    <property type="term" value="F:rRNA binding"/>
    <property type="evidence" value="ECO:0007669"/>
    <property type="project" value="UniProtKB-UniRule"/>
</dbReference>
<dbReference type="GO" id="GO:0003735">
    <property type="term" value="F:structural constituent of ribosome"/>
    <property type="evidence" value="ECO:0007669"/>
    <property type="project" value="InterPro"/>
</dbReference>
<dbReference type="GO" id="GO:0006412">
    <property type="term" value="P:translation"/>
    <property type="evidence" value="ECO:0007669"/>
    <property type="project" value="UniProtKB-UniRule"/>
</dbReference>
<dbReference type="FunFam" id="3.40.5.10:FF:000003">
    <property type="entry name" value="50S ribosomal protein L9"/>
    <property type="match status" value="1"/>
</dbReference>
<dbReference type="Gene3D" id="3.10.430.100">
    <property type="entry name" value="Ribosomal protein L9, C-terminal domain"/>
    <property type="match status" value="1"/>
</dbReference>
<dbReference type="Gene3D" id="3.40.5.10">
    <property type="entry name" value="Ribosomal protein L9, N-terminal domain"/>
    <property type="match status" value="1"/>
</dbReference>
<dbReference type="HAMAP" id="MF_00503">
    <property type="entry name" value="Ribosomal_bL9"/>
    <property type="match status" value="1"/>
</dbReference>
<dbReference type="InterPro" id="IPR000244">
    <property type="entry name" value="Ribosomal_bL9"/>
</dbReference>
<dbReference type="InterPro" id="IPR009027">
    <property type="entry name" value="Ribosomal_bL9/RNase_H1_N"/>
</dbReference>
<dbReference type="InterPro" id="IPR020594">
    <property type="entry name" value="Ribosomal_bL9_bac/chp"/>
</dbReference>
<dbReference type="InterPro" id="IPR020069">
    <property type="entry name" value="Ribosomal_bL9_C"/>
</dbReference>
<dbReference type="InterPro" id="IPR036791">
    <property type="entry name" value="Ribosomal_bL9_C_sf"/>
</dbReference>
<dbReference type="InterPro" id="IPR020070">
    <property type="entry name" value="Ribosomal_bL9_N"/>
</dbReference>
<dbReference type="InterPro" id="IPR036935">
    <property type="entry name" value="Ribosomal_bL9_N_sf"/>
</dbReference>
<dbReference type="NCBIfam" id="TIGR00158">
    <property type="entry name" value="L9"/>
    <property type="match status" value="1"/>
</dbReference>
<dbReference type="PANTHER" id="PTHR21368">
    <property type="entry name" value="50S RIBOSOMAL PROTEIN L9"/>
    <property type="match status" value="1"/>
</dbReference>
<dbReference type="Pfam" id="PF03948">
    <property type="entry name" value="Ribosomal_L9_C"/>
    <property type="match status" value="1"/>
</dbReference>
<dbReference type="Pfam" id="PF01281">
    <property type="entry name" value="Ribosomal_L9_N"/>
    <property type="match status" value="1"/>
</dbReference>
<dbReference type="SUPFAM" id="SSF55658">
    <property type="entry name" value="L9 N-domain-like"/>
    <property type="match status" value="1"/>
</dbReference>
<dbReference type="SUPFAM" id="SSF55653">
    <property type="entry name" value="Ribosomal protein L9 C-domain"/>
    <property type="match status" value="1"/>
</dbReference>
<dbReference type="PROSITE" id="PS00651">
    <property type="entry name" value="RIBOSOMAL_L9"/>
    <property type="match status" value="1"/>
</dbReference>
<name>RL9_THET8</name>
<proteinExistence type="evidence at protein level"/>